<proteinExistence type="inferred from homology"/>
<organism>
    <name type="scientific">Saccharolobus islandicus (strain M.16.4 / Kamchatka #3)</name>
    <name type="common">Sulfolobus islandicus</name>
    <dbReference type="NCBI Taxonomy" id="426118"/>
    <lineage>
        <taxon>Archaea</taxon>
        <taxon>Thermoproteota</taxon>
        <taxon>Thermoprotei</taxon>
        <taxon>Sulfolobales</taxon>
        <taxon>Sulfolobaceae</taxon>
        <taxon>Saccharolobus</taxon>
    </lineage>
</organism>
<protein>
    <recommendedName>
        <fullName evidence="1">NAD kinase</fullName>
        <ecNumber evidence="1">2.7.1.23</ecNumber>
    </recommendedName>
    <alternativeName>
        <fullName evidence="1">ATP-dependent NAD kinase</fullName>
    </alternativeName>
</protein>
<sequence>MRVKIVSKPTSQLNNIIEKIKNISTKLGFEVVDKDFDYVIAVGGDGTLLRAVKQNKPVIAVKAGRRGLLMDVPVDKFEEALLRLKKGDYEEEEYMLLEMIYNDKVELGFNEVGILYDRPEAIKVGISFDTERVSVEGDGVLVSTPQGSSGWGMSATNSLLYKDLSAIEIIFVNPIFYYLRSVVIPPKPLTLRLEDKGYPQTARAVVDGEVVTLIKTNQEITVRVSQRKAKILRFFKLDLIGEVLHAYHI</sequence>
<name>NADK_SACI6</name>
<comment type="function">
    <text evidence="1">Involved in the regulation of the intracellular balance of NAD and NADP, and is a key enzyme in the biosynthesis of NADP. Catalyzes specifically the phosphorylation on 2'-hydroxyl of the adenosine moiety of NAD to yield NADP.</text>
</comment>
<comment type="catalytic activity">
    <reaction evidence="1">
        <text>NAD(+) + ATP = ADP + NADP(+) + H(+)</text>
        <dbReference type="Rhea" id="RHEA:18629"/>
        <dbReference type="ChEBI" id="CHEBI:15378"/>
        <dbReference type="ChEBI" id="CHEBI:30616"/>
        <dbReference type="ChEBI" id="CHEBI:57540"/>
        <dbReference type="ChEBI" id="CHEBI:58349"/>
        <dbReference type="ChEBI" id="CHEBI:456216"/>
        <dbReference type="EC" id="2.7.1.23"/>
    </reaction>
</comment>
<comment type="cofactor">
    <cofactor evidence="1">
        <name>a divalent metal cation</name>
        <dbReference type="ChEBI" id="CHEBI:60240"/>
    </cofactor>
</comment>
<comment type="subcellular location">
    <subcellularLocation>
        <location evidence="1">Cytoplasm</location>
    </subcellularLocation>
</comment>
<comment type="similarity">
    <text evidence="1">Belongs to the NAD kinase family.</text>
</comment>
<accession>C4KJF1</accession>
<evidence type="ECO:0000255" key="1">
    <source>
        <dbReference type="HAMAP-Rule" id="MF_00361"/>
    </source>
</evidence>
<feature type="chain" id="PRO_1000205426" description="NAD kinase">
    <location>
        <begin position="1"/>
        <end position="249"/>
    </location>
</feature>
<feature type="active site" description="Proton acceptor" evidence="1">
    <location>
        <position position="45"/>
    </location>
</feature>
<feature type="binding site" evidence="1">
    <location>
        <begin position="45"/>
        <end position="46"/>
    </location>
    <ligand>
        <name>NAD(+)</name>
        <dbReference type="ChEBI" id="CHEBI:57540"/>
    </ligand>
</feature>
<feature type="binding site" evidence="1">
    <location>
        <position position="50"/>
    </location>
    <ligand>
        <name>NAD(+)</name>
        <dbReference type="ChEBI" id="CHEBI:57540"/>
    </ligand>
</feature>
<feature type="binding site" evidence="1">
    <location>
        <begin position="110"/>
        <end position="111"/>
    </location>
    <ligand>
        <name>NAD(+)</name>
        <dbReference type="ChEBI" id="CHEBI:57540"/>
    </ligand>
</feature>
<feature type="binding site" evidence="1">
    <location>
        <position position="138"/>
    </location>
    <ligand>
        <name>NAD(+)</name>
        <dbReference type="ChEBI" id="CHEBI:57540"/>
    </ligand>
</feature>
<feature type="binding site" evidence="1">
    <location>
        <begin position="149"/>
        <end position="154"/>
    </location>
    <ligand>
        <name>NAD(+)</name>
        <dbReference type="ChEBI" id="CHEBI:57540"/>
    </ligand>
</feature>
<gene>
    <name evidence="1" type="primary">nadK</name>
    <name type="ordered locus">M164_0035</name>
</gene>
<dbReference type="EC" id="2.7.1.23" evidence="1"/>
<dbReference type="EMBL" id="CP001402">
    <property type="protein sequence ID" value="ACR40671.1"/>
    <property type="molecule type" value="Genomic_DNA"/>
</dbReference>
<dbReference type="RefSeq" id="WP_012710214.1">
    <property type="nucleotide sequence ID" value="NC_012726.1"/>
</dbReference>
<dbReference type="SMR" id="C4KJF1"/>
<dbReference type="KEGG" id="sid:M164_0035"/>
<dbReference type="HOGENOM" id="CLU_008831_0_3_2"/>
<dbReference type="Proteomes" id="UP000001479">
    <property type="component" value="Chromosome"/>
</dbReference>
<dbReference type="GO" id="GO:0005737">
    <property type="term" value="C:cytoplasm"/>
    <property type="evidence" value="ECO:0007669"/>
    <property type="project" value="UniProtKB-SubCell"/>
</dbReference>
<dbReference type="GO" id="GO:0005524">
    <property type="term" value="F:ATP binding"/>
    <property type="evidence" value="ECO:0007669"/>
    <property type="project" value="UniProtKB-KW"/>
</dbReference>
<dbReference type="GO" id="GO:0046872">
    <property type="term" value="F:metal ion binding"/>
    <property type="evidence" value="ECO:0007669"/>
    <property type="project" value="UniProtKB-UniRule"/>
</dbReference>
<dbReference type="GO" id="GO:0003951">
    <property type="term" value="F:NAD+ kinase activity"/>
    <property type="evidence" value="ECO:0007669"/>
    <property type="project" value="UniProtKB-UniRule"/>
</dbReference>
<dbReference type="GO" id="GO:0019674">
    <property type="term" value="P:NAD metabolic process"/>
    <property type="evidence" value="ECO:0007669"/>
    <property type="project" value="InterPro"/>
</dbReference>
<dbReference type="GO" id="GO:0006741">
    <property type="term" value="P:NADP biosynthetic process"/>
    <property type="evidence" value="ECO:0007669"/>
    <property type="project" value="UniProtKB-UniRule"/>
</dbReference>
<dbReference type="Gene3D" id="3.40.50.10330">
    <property type="entry name" value="Probable inorganic polyphosphate/atp-NAD kinase, domain 1"/>
    <property type="match status" value="1"/>
</dbReference>
<dbReference type="Gene3D" id="2.60.200.30">
    <property type="entry name" value="Probable inorganic polyphosphate/atp-NAD kinase, domain 2"/>
    <property type="match status" value="1"/>
</dbReference>
<dbReference type="HAMAP" id="MF_00361">
    <property type="entry name" value="NAD_kinase"/>
    <property type="match status" value="1"/>
</dbReference>
<dbReference type="InterPro" id="IPR017438">
    <property type="entry name" value="ATP-NAD_kinase_N"/>
</dbReference>
<dbReference type="InterPro" id="IPR017437">
    <property type="entry name" value="ATP-NAD_kinase_PpnK-typ_C"/>
</dbReference>
<dbReference type="InterPro" id="IPR016064">
    <property type="entry name" value="NAD/diacylglycerol_kinase_sf"/>
</dbReference>
<dbReference type="InterPro" id="IPR002504">
    <property type="entry name" value="NADK"/>
</dbReference>
<dbReference type="PANTHER" id="PTHR20275:SF43">
    <property type="entry name" value="BIFUNCTIONAL NADP PHOSPHATASE_NAD KINASE"/>
    <property type="match status" value="1"/>
</dbReference>
<dbReference type="PANTHER" id="PTHR20275">
    <property type="entry name" value="NAD KINASE"/>
    <property type="match status" value="1"/>
</dbReference>
<dbReference type="Pfam" id="PF01513">
    <property type="entry name" value="NAD_kinase"/>
    <property type="match status" value="1"/>
</dbReference>
<dbReference type="Pfam" id="PF20143">
    <property type="entry name" value="NAD_kinase_C"/>
    <property type="match status" value="1"/>
</dbReference>
<dbReference type="SUPFAM" id="SSF111331">
    <property type="entry name" value="NAD kinase/diacylglycerol kinase-like"/>
    <property type="match status" value="1"/>
</dbReference>
<keyword id="KW-0067">ATP-binding</keyword>
<keyword id="KW-0963">Cytoplasm</keyword>
<keyword id="KW-0418">Kinase</keyword>
<keyword id="KW-0520">NAD</keyword>
<keyword id="KW-0521">NADP</keyword>
<keyword id="KW-0547">Nucleotide-binding</keyword>
<keyword id="KW-0808">Transferase</keyword>
<reference key="1">
    <citation type="journal article" date="2009" name="Proc. Natl. Acad. Sci. U.S.A.">
        <title>Biogeography of the Sulfolobus islandicus pan-genome.</title>
        <authorList>
            <person name="Reno M.L."/>
            <person name="Held N.L."/>
            <person name="Fields C.J."/>
            <person name="Burke P.V."/>
            <person name="Whitaker R.J."/>
        </authorList>
    </citation>
    <scope>NUCLEOTIDE SEQUENCE [LARGE SCALE GENOMIC DNA]</scope>
    <source>
        <strain>M.16.4 / Kamchatka #3</strain>
    </source>
</reference>